<gene>
    <name type="primary">RAB32</name>
</gene>
<organism>
    <name type="scientific">Sus scrofa</name>
    <name type="common">Pig</name>
    <dbReference type="NCBI Taxonomy" id="9823"/>
    <lineage>
        <taxon>Eukaryota</taxon>
        <taxon>Metazoa</taxon>
        <taxon>Chordata</taxon>
        <taxon>Craniata</taxon>
        <taxon>Vertebrata</taxon>
        <taxon>Euteleostomi</taxon>
        <taxon>Mammalia</taxon>
        <taxon>Eutheria</taxon>
        <taxon>Laurasiatheria</taxon>
        <taxon>Artiodactyla</taxon>
        <taxon>Suina</taxon>
        <taxon>Suidae</taxon>
        <taxon>Sus</taxon>
    </lineage>
</organism>
<protein>
    <recommendedName>
        <fullName>Ras-related protein Rab-32</fullName>
        <ecNumber evidence="2">3.6.5.2</ecNumber>
    </recommendedName>
</protein>
<proteinExistence type="evidence at transcript level"/>
<feature type="initiator methionine" description="Removed" evidence="2">
    <location>
        <position position="1"/>
    </location>
</feature>
<feature type="chain" id="PRO_0000288610" description="Ras-related protein Rab-32">
    <location>
        <begin position="2"/>
        <end position="226"/>
    </location>
</feature>
<feature type="region of interest" description="PKA-RII subunit binding domain" evidence="1">
    <location>
        <begin position="180"/>
        <end position="199"/>
    </location>
</feature>
<feature type="region of interest" description="Disordered" evidence="4">
    <location>
        <begin position="202"/>
        <end position="226"/>
    </location>
</feature>
<feature type="short sequence motif" description="Switch 1" evidence="2">
    <location>
        <begin position="50"/>
        <end position="64"/>
    </location>
</feature>
<feature type="short sequence motif" description="Switch 2" evidence="2">
    <location>
        <begin position="86"/>
        <end position="99"/>
    </location>
</feature>
<feature type="compositionally biased region" description="Basic and acidic residues" evidence="4">
    <location>
        <begin position="206"/>
        <end position="226"/>
    </location>
</feature>
<feature type="binding site" evidence="2">
    <location>
        <position position="38"/>
    </location>
    <ligand>
        <name>GTP</name>
        <dbReference type="ChEBI" id="CHEBI:37565"/>
    </ligand>
</feature>
<feature type="binding site" evidence="2">
    <location>
        <position position="39"/>
    </location>
    <ligand>
        <name>GTP</name>
        <dbReference type="ChEBI" id="CHEBI:37565"/>
    </ligand>
</feature>
<feature type="binding site" evidence="2">
    <location>
        <position position="40"/>
    </location>
    <ligand>
        <name>GTP</name>
        <dbReference type="ChEBI" id="CHEBI:37565"/>
    </ligand>
</feature>
<feature type="binding site" evidence="2">
    <location>
        <position position="41"/>
    </location>
    <ligand>
        <name>GTP</name>
        <dbReference type="ChEBI" id="CHEBI:37565"/>
    </ligand>
</feature>
<feature type="binding site" evidence="2">
    <location>
        <position position="41"/>
    </location>
    <ligand>
        <name>Mg(2+)</name>
        <dbReference type="ChEBI" id="CHEBI:18420"/>
    </ligand>
</feature>
<feature type="binding site" evidence="2">
    <location>
        <position position="42"/>
    </location>
    <ligand>
        <name>GTP</name>
        <dbReference type="ChEBI" id="CHEBI:37565"/>
    </ligand>
</feature>
<feature type="binding site" evidence="2">
    <location>
        <position position="53"/>
    </location>
    <ligand>
        <name>GTP</name>
        <dbReference type="ChEBI" id="CHEBI:37565"/>
    </ligand>
</feature>
<feature type="binding site" evidence="2">
    <location>
        <position position="54"/>
    </location>
    <ligand>
        <name>GTP</name>
        <dbReference type="ChEBI" id="CHEBI:37565"/>
    </ligand>
</feature>
<feature type="binding site" evidence="2">
    <location>
        <position position="56"/>
    </location>
    <ligand>
        <name>GTP</name>
        <dbReference type="ChEBI" id="CHEBI:37565"/>
    </ligand>
</feature>
<feature type="binding site" evidence="2">
    <location>
        <position position="59"/>
    </location>
    <ligand>
        <name>GTP</name>
        <dbReference type="ChEBI" id="CHEBI:37565"/>
    </ligand>
</feature>
<feature type="binding site" evidence="2">
    <location>
        <position position="59"/>
    </location>
    <ligand>
        <name>Mg(2+)</name>
        <dbReference type="ChEBI" id="CHEBI:18420"/>
    </ligand>
</feature>
<feature type="binding site" evidence="2">
    <location>
        <position position="83"/>
    </location>
    <ligand>
        <name>Mg(2+)</name>
        <dbReference type="ChEBI" id="CHEBI:18420"/>
    </ligand>
</feature>
<feature type="binding site" evidence="2">
    <location>
        <position position="86"/>
    </location>
    <ligand>
        <name>GTP</name>
        <dbReference type="ChEBI" id="CHEBI:37565"/>
    </ligand>
</feature>
<feature type="binding site" evidence="2">
    <location>
        <position position="145"/>
    </location>
    <ligand>
        <name>GTP</name>
        <dbReference type="ChEBI" id="CHEBI:37565"/>
    </ligand>
</feature>
<feature type="binding site" evidence="2">
    <location>
        <position position="146"/>
    </location>
    <ligand>
        <name>GTP</name>
        <dbReference type="ChEBI" id="CHEBI:37565"/>
    </ligand>
</feature>
<feature type="binding site" evidence="2">
    <location>
        <position position="148"/>
    </location>
    <ligand>
        <name>GTP</name>
        <dbReference type="ChEBI" id="CHEBI:37565"/>
    </ligand>
</feature>
<feature type="binding site" evidence="2">
    <location>
        <position position="177"/>
    </location>
    <ligand>
        <name>GTP</name>
        <dbReference type="ChEBI" id="CHEBI:37565"/>
    </ligand>
</feature>
<feature type="binding site" evidence="2">
    <location>
        <position position="178"/>
    </location>
    <ligand>
        <name>GTP</name>
        <dbReference type="ChEBI" id="CHEBI:37565"/>
    </ligand>
</feature>
<feature type="modified residue" description="N-acetylalanine" evidence="2">
    <location>
        <position position="2"/>
    </location>
</feature>
<feature type="modified residue" description="Phosphoserine" evidence="2">
    <location>
        <position position="73"/>
    </location>
</feature>
<feature type="lipid moiety-binding region" description="S-geranylgeranyl cysteine" evidence="1">
    <location>
        <position position="225"/>
    </location>
</feature>
<feature type="lipid moiety-binding region" description="S-geranylgeranyl cysteine" evidence="1">
    <location>
        <position position="226"/>
    </location>
</feature>
<dbReference type="EC" id="3.6.5.2" evidence="2"/>
<dbReference type="EMBL" id="DQ917630">
    <property type="protein sequence ID" value="ABI97175.1"/>
    <property type="molecule type" value="mRNA"/>
</dbReference>
<dbReference type="RefSeq" id="NP_001116648.1">
    <property type="nucleotide sequence ID" value="NM_001123176.1"/>
</dbReference>
<dbReference type="SMR" id="Q06AU5"/>
<dbReference type="FunCoup" id="Q06AU5">
    <property type="interactions" value="166"/>
</dbReference>
<dbReference type="STRING" id="9823.ENSSSCP00000055022"/>
<dbReference type="PaxDb" id="9823-ENSSSCP00000004449"/>
<dbReference type="PeptideAtlas" id="Q06AU5"/>
<dbReference type="GeneID" id="100144496"/>
<dbReference type="KEGG" id="ssc:100144496"/>
<dbReference type="CTD" id="10981"/>
<dbReference type="eggNOG" id="KOG4423">
    <property type="taxonomic scope" value="Eukaryota"/>
</dbReference>
<dbReference type="InParanoid" id="Q06AU5"/>
<dbReference type="OrthoDB" id="245989at2759"/>
<dbReference type="Proteomes" id="UP000008227">
    <property type="component" value="Unplaced"/>
</dbReference>
<dbReference type="Proteomes" id="UP000314985">
    <property type="component" value="Unplaced"/>
</dbReference>
<dbReference type="Proteomes" id="UP000694570">
    <property type="component" value="Unplaced"/>
</dbReference>
<dbReference type="Proteomes" id="UP000694571">
    <property type="component" value="Unplaced"/>
</dbReference>
<dbReference type="Proteomes" id="UP000694720">
    <property type="component" value="Unplaced"/>
</dbReference>
<dbReference type="Proteomes" id="UP000694722">
    <property type="component" value="Unplaced"/>
</dbReference>
<dbReference type="Proteomes" id="UP000694723">
    <property type="component" value="Unplaced"/>
</dbReference>
<dbReference type="Proteomes" id="UP000694724">
    <property type="component" value="Unplaced"/>
</dbReference>
<dbReference type="Proteomes" id="UP000694725">
    <property type="component" value="Unplaced"/>
</dbReference>
<dbReference type="Proteomes" id="UP000694726">
    <property type="component" value="Unplaced"/>
</dbReference>
<dbReference type="Proteomes" id="UP000694727">
    <property type="component" value="Unplaced"/>
</dbReference>
<dbReference type="Proteomes" id="UP000694728">
    <property type="component" value="Unplaced"/>
</dbReference>
<dbReference type="GO" id="GO:0012505">
    <property type="term" value="C:endomembrane system"/>
    <property type="evidence" value="ECO:0000318"/>
    <property type="project" value="GO_Central"/>
</dbReference>
<dbReference type="GO" id="GO:0042470">
    <property type="term" value="C:melanosome"/>
    <property type="evidence" value="ECO:0000250"/>
    <property type="project" value="UniProtKB"/>
</dbReference>
<dbReference type="GO" id="GO:0033162">
    <property type="term" value="C:melanosome membrane"/>
    <property type="evidence" value="ECO:0000250"/>
    <property type="project" value="UniProtKB"/>
</dbReference>
<dbReference type="GO" id="GO:0005741">
    <property type="term" value="C:mitochondrial outer membrane"/>
    <property type="evidence" value="ECO:0000250"/>
    <property type="project" value="UniProtKB"/>
</dbReference>
<dbReference type="GO" id="GO:0005739">
    <property type="term" value="C:mitochondrion"/>
    <property type="evidence" value="ECO:0000318"/>
    <property type="project" value="GO_Central"/>
</dbReference>
<dbReference type="GO" id="GO:0045335">
    <property type="term" value="C:phagocytic vesicle"/>
    <property type="evidence" value="ECO:0000250"/>
    <property type="project" value="UniProtKB"/>
</dbReference>
<dbReference type="GO" id="GO:0030670">
    <property type="term" value="C:phagocytic vesicle membrane"/>
    <property type="evidence" value="ECO:0007669"/>
    <property type="project" value="UniProtKB-SubCell"/>
</dbReference>
<dbReference type="GO" id="GO:0005802">
    <property type="term" value="C:trans-Golgi network"/>
    <property type="evidence" value="ECO:0000318"/>
    <property type="project" value="GO_Central"/>
</dbReference>
<dbReference type="GO" id="GO:0005525">
    <property type="term" value="F:GTP binding"/>
    <property type="evidence" value="ECO:0007669"/>
    <property type="project" value="UniProtKB-KW"/>
</dbReference>
<dbReference type="GO" id="GO:0003924">
    <property type="term" value="F:GTPase activity"/>
    <property type="evidence" value="ECO:0000250"/>
    <property type="project" value="UniProtKB"/>
</dbReference>
<dbReference type="GO" id="GO:0006886">
    <property type="term" value="P:intracellular protein transport"/>
    <property type="evidence" value="ECO:0000318"/>
    <property type="project" value="GO_Central"/>
</dbReference>
<dbReference type="GO" id="GO:1903232">
    <property type="term" value="P:melanosome assembly"/>
    <property type="evidence" value="ECO:0000250"/>
    <property type="project" value="UniProtKB"/>
</dbReference>
<dbReference type="GO" id="GO:0032438">
    <property type="term" value="P:melanosome organization"/>
    <property type="evidence" value="ECO:0000318"/>
    <property type="project" value="GO_Central"/>
</dbReference>
<dbReference type="GO" id="GO:0090382">
    <property type="term" value="P:phagosome maturation"/>
    <property type="evidence" value="ECO:0000250"/>
    <property type="project" value="UniProtKB"/>
</dbReference>
<dbReference type="GO" id="GO:0016192">
    <property type="term" value="P:vesicle-mediated transport"/>
    <property type="evidence" value="ECO:0007669"/>
    <property type="project" value="InterPro"/>
</dbReference>
<dbReference type="CDD" id="cd04107">
    <property type="entry name" value="Rab32_Rab38"/>
    <property type="match status" value="1"/>
</dbReference>
<dbReference type="FunFam" id="3.40.50.300:FF:000222">
    <property type="entry name" value="RAB32, member RAS oncogene family"/>
    <property type="match status" value="1"/>
</dbReference>
<dbReference type="Gene3D" id="3.40.50.300">
    <property type="entry name" value="P-loop containing nucleotide triphosphate hydrolases"/>
    <property type="match status" value="1"/>
</dbReference>
<dbReference type="InterPro" id="IPR027417">
    <property type="entry name" value="P-loop_NTPase"/>
</dbReference>
<dbReference type="InterPro" id="IPR030697">
    <property type="entry name" value="Rab29/Rab38/Rab32"/>
</dbReference>
<dbReference type="InterPro" id="IPR005225">
    <property type="entry name" value="Small_GTP-bd"/>
</dbReference>
<dbReference type="InterPro" id="IPR001806">
    <property type="entry name" value="Small_GTPase"/>
</dbReference>
<dbReference type="NCBIfam" id="TIGR00231">
    <property type="entry name" value="small_GTP"/>
    <property type="match status" value="1"/>
</dbReference>
<dbReference type="PANTHER" id="PTHR47981">
    <property type="entry name" value="RAB FAMILY"/>
    <property type="match status" value="1"/>
</dbReference>
<dbReference type="PANTHER" id="PTHR47981:SF41">
    <property type="entry name" value="RAS-RELATED PROTEIN RAB-32 ISOFORM X1"/>
    <property type="match status" value="1"/>
</dbReference>
<dbReference type="Pfam" id="PF00071">
    <property type="entry name" value="Ras"/>
    <property type="match status" value="1"/>
</dbReference>
<dbReference type="PRINTS" id="PR00449">
    <property type="entry name" value="RASTRNSFRMNG"/>
</dbReference>
<dbReference type="SMART" id="SM00175">
    <property type="entry name" value="RAB"/>
    <property type="match status" value="1"/>
</dbReference>
<dbReference type="SMART" id="SM00176">
    <property type="entry name" value="RAN"/>
    <property type="match status" value="1"/>
</dbReference>
<dbReference type="SMART" id="SM00173">
    <property type="entry name" value="RAS"/>
    <property type="match status" value="1"/>
</dbReference>
<dbReference type="SMART" id="SM00174">
    <property type="entry name" value="RHO"/>
    <property type="match status" value="1"/>
</dbReference>
<dbReference type="SUPFAM" id="SSF52540">
    <property type="entry name" value="P-loop containing nucleoside triphosphate hydrolases"/>
    <property type="match status" value="1"/>
</dbReference>
<dbReference type="PROSITE" id="PS51419">
    <property type="entry name" value="RAB"/>
    <property type="match status" value="1"/>
</dbReference>
<reference key="1">
    <citation type="submission" date="2006-08" db="EMBL/GenBank/DDBJ databases">
        <authorList>
            <person name="Liu G.Y."/>
        </authorList>
    </citation>
    <scope>NUCLEOTIDE SEQUENCE [LARGE SCALE MRNA]</scope>
</reference>
<sequence>MAGGGAGDPGQGAAAAAAAAPETREHLFKVLVIGELGVGKTSIIKRYVHQLFSQHYRATIGVDFALKVLNWDSRTLVRLQLWDIAGQERFGNMTRVYYKEAVGALVVFDISRGSPFEAVLKWKNDLDSKVHLPNGSPIPAVLLANKCDQKKDSGQNPSQMDQFCKEHGFTGWFETSAKDNINIDEAARFLVENILANHQSFPSEENDGRIKLDEETMKKENKSHCC</sequence>
<comment type="function">
    <text evidence="2 3">The small GTPases Rab are key regulators of intracellular membrane trafficking, from the formation of transport vesicles to their fusion with membranes. Rabs cycle between an inactive GDP-bound form and an active GTP-bound form that is able to recruit to membranes different set of downstream effectors directly responsible for vesicle formation, movement, tethering and fusion. Also acts as an A-kinase anchoring protein by binding to the type II regulatory subunit of protein kinase A and anchoring it to the mitochondrion. Also involved in synchronization of mitochondrial fission. Plays a role in the maturation of phagosomes that engulf pathogens, such as S.aureus and M.tuberculosis. Plays an important role in the control of melanin production and melanosome biogenesis (By similarity). In concert with RAB38, regulates the proper trafficking of melanogenic enzymes TYR, TYRP1 and DCT/TYRP2 to melanosomes in melanocytes (By similarity). Stimulates phosphorylation of RAB10 'Thr-73' by LRRK2 (By similarity).</text>
</comment>
<comment type="catalytic activity">
    <reaction evidence="2">
        <text>GTP + H2O = GDP + phosphate + H(+)</text>
        <dbReference type="Rhea" id="RHEA:19669"/>
        <dbReference type="ChEBI" id="CHEBI:15377"/>
        <dbReference type="ChEBI" id="CHEBI:15378"/>
        <dbReference type="ChEBI" id="CHEBI:37565"/>
        <dbReference type="ChEBI" id="CHEBI:43474"/>
        <dbReference type="ChEBI" id="CHEBI:58189"/>
        <dbReference type="EC" id="3.6.5.2"/>
    </reaction>
    <physiologicalReaction direction="left-to-right" evidence="2">
        <dbReference type="Rhea" id="RHEA:19670"/>
    </physiologicalReaction>
</comment>
<comment type="cofactor">
    <cofactor evidence="2">
        <name>Mg(2+)</name>
        <dbReference type="ChEBI" id="CHEBI:18420"/>
    </cofactor>
</comment>
<comment type="activity regulation">
    <text evidence="2 5">Regulated by guanine the nucleotide exchange factor (GEF) BLOC-3 complex composed of HPS1 and HPS4 which promote the exchange of bound GDP for free GTP (By similarity). Regulated by the GTPase activating protein (GAP) SGSM2/RUTBC1 which increases the GTP hydrolysis activity (By similarity). Inhibited by GDP dissociation inhibitors (GDIs) which prevent Rab-GDP dissociation (Probable).</text>
</comment>
<comment type="subunit">
    <text evidence="2 3">Interacts with ANKRD27 (By similarity). A decreased interaction with ANKRD27 seen in the presence of SGSM2 (By similarity). Interacts with LRRK2 (via N-terminus); this interaction results in stimulation of RAB10 phosphorylation by LRRK2 (By similarity).</text>
</comment>
<comment type="subcellular location">
    <subcellularLocation>
        <location evidence="2">Mitochondrion</location>
    </subcellularLocation>
    <subcellularLocation>
        <location evidence="5">Mitochondrion outer membrane</location>
        <topology evidence="5">Lipid-anchor</topology>
    </subcellularLocation>
    <subcellularLocation>
        <location evidence="2">Cytoplasmic vesicle</location>
        <location evidence="2">Phagosome</location>
    </subcellularLocation>
    <subcellularLocation>
        <location evidence="5">Cytoplasmic vesicle</location>
        <location evidence="5">Phagosome membrane</location>
        <topology evidence="5">Lipid-anchor</topology>
        <orientation evidence="5">Cytoplasmic side</orientation>
    </subcellularLocation>
    <subcellularLocation>
        <location evidence="3">Melanosome</location>
    </subcellularLocation>
    <subcellularLocation>
        <location evidence="2">Melanosome membrane</location>
    </subcellularLocation>
    <text evidence="2">Recruited to phagosomes containing S.aureus or M.tuberculosis. The BLOC-3 complex, a heterodimer of HPS1 and HPS4 promotes its membrane localization.</text>
</comment>
<comment type="domain">
    <text evidence="2">Switch 1, switch 2 and the interswitch regions are characteristic of Rab GTPases and mediate the interactions with Rab downstream effectors. The switch regions undergo conformational changes upon nucleotide binding which drive interaction with specific sets of effector proteins, with most effectors only binding to GTP-bound Rab.</text>
</comment>
<comment type="similarity">
    <text evidence="5">Belongs to the small GTPase superfamily. Rab family.</text>
</comment>
<name>RAB32_PIG</name>
<evidence type="ECO:0000250" key="1"/>
<evidence type="ECO:0000250" key="2">
    <source>
        <dbReference type="UniProtKB" id="Q13637"/>
    </source>
</evidence>
<evidence type="ECO:0000250" key="3">
    <source>
        <dbReference type="UniProtKB" id="Q9CZE3"/>
    </source>
</evidence>
<evidence type="ECO:0000256" key="4">
    <source>
        <dbReference type="SAM" id="MobiDB-lite"/>
    </source>
</evidence>
<evidence type="ECO:0000305" key="5"/>
<accession>Q06AU5</accession>
<keyword id="KW-0007">Acetylation</keyword>
<keyword id="KW-0968">Cytoplasmic vesicle</keyword>
<keyword id="KW-0342">GTP-binding</keyword>
<keyword id="KW-0378">Hydrolase</keyword>
<keyword id="KW-0449">Lipoprotein</keyword>
<keyword id="KW-0460">Magnesium</keyword>
<keyword id="KW-0472">Membrane</keyword>
<keyword id="KW-0479">Metal-binding</keyword>
<keyword id="KW-0496">Mitochondrion</keyword>
<keyword id="KW-1000">Mitochondrion outer membrane</keyword>
<keyword id="KW-0547">Nucleotide-binding</keyword>
<keyword id="KW-0597">Phosphoprotein</keyword>
<keyword id="KW-0636">Prenylation</keyword>
<keyword id="KW-1185">Reference proteome</keyword>